<proteinExistence type="inferred from homology"/>
<keyword id="KW-0119">Carbohydrate metabolism</keyword>
<keyword id="KW-0325">Glycoprotein</keyword>
<keyword id="KW-0326">Glycosidase</keyword>
<keyword id="KW-0378">Hydrolase</keyword>
<keyword id="KW-0624">Polysaccharide degradation</keyword>
<keyword id="KW-0964">Secreted</keyword>
<keyword id="KW-0732">Signal</keyword>
<dbReference type="EC" id="3.2.1.55"/>
<dbReference type="EMBL" id="DS499594">
    <property type="protein sequence ID" value="EDP56226.1"/>
    <property type="status" value="ALT_SEQ"/>
    <property type="molecule type" value="Genomic_DNA"/>
</dbReference>
<dbReference type="SMR" id="B0XQB2"/>
<dbReference type="GlyCosmos" id="B0XQB2">
    <property type="glycosylation" value="4 sites, No reported glycans"/>
</dbReference>
<dbReference type="OrthoDB" id="1290at5052"/>
<dbReference type="PhylomeDB" id="B0XQB2"/>
<dbReference type="UniPathway" id="UPA00667"/>
<dbReference type="Proteomes" id="UP000001699">
    <property type="component" value="Unassembled WGS sequence"/>
</dbReference>
<dbReference type="GO" id="GO:0005576">
    <property type="term" value="C:extracellular region"/>
    <property type="evidence" value="ECO:0007669"/>
    <property type="project" value="UniProtKB-SubCell"/>
</dbReference>
<dbReference type="GO" id="GO:0046556">
    <property type="term" value="F:alpha-L-arabinofuranosidase activity"/>
    <property type="evidence" value="ECO:0007669"/>
    <property type="project" value="UniProtKB-EC"/>
</dbReference>
<dbReference type="GO" id="GO:0031222">
    <property type="term" value="P:arabinan catabolic process"/>
    <property type="evidence" value="ECO:0007669"/>
    <property type="project" value="UniProtKB-UniPathway"/>
</dbReference>
<dbReference type="GO" id="GO:0046373">
    <property type="term" value="P:L-arabinose metabolic process"/>
    <property type="evidence" value="ECO:0007669"/>
    <property type="project" value="InterPro"/>
</dbReference>
<dbReference type="FunFam" id="3.20.20.80:FF:000110">
    <property type="entry name" value="Alpha-L-arabinofuranosidase C"/>
    <property type="match status" value="1"/>
</dbReference>
<dbReference type="Gene3D" id="3.20.20.80">
    <property type="entry name" value="Glycosidases"/>
    <property type="match status" value="1"/>
</dbReference>
<dbReference type="Gene3D" id="2.60.40.1180">
    <property type="entry name" value="Golgi alpha-mannosidase II"/>
    <property type="match status" value="1"/>
</dbReference>
<dbReference type="InterPro" id="IPR010720">
    <property type="entry name" value="Alpha-L-AF_C"/>
</dbReference>
<dbReference type="InterPro" id="IPR013780">
    <property type="entry name" value="Glyco_hydro_b"/>
</dbReference>
<dbReference type="InterPro" id="IPR017853">
    <property type="entry name" value="Glycoside_hydrolase_SF"/>
</dbReference>
<dbReference type="PANTHER" id="PTHR43576:SF3">
    <property type="entry name" value="ALPHA-L-ARABINOFURANOSIDASE C"/>
    <property type="match status" value="1"/>
</dbReference>
<dbReference type="PANTHER" id="PTHR43576">
    <property type="entry name" value="ALPHA-L-ARABINOFURANOSIDASE C-RELATED"/>
    <property type="match status" value="1"/>
</dbReference>
<dbReference type="Pfam" id="PF06964">
    <property type="entry name" value="Alpha-L-AF_C"/>
    <property type="match status" value="1"/>
</dbReference>
<dbReference type="SMART" id="SM00813">
    <property type="entry name" value="Alpha-L-AF_C"/>
    <property type="match status" value="1"/>
</dbReference>
<dbReference type="SUPFAM" id="SSF51445">
    <property type="entry name" value="(Trans)glycosidases"/>
    <property type="match status" value="1"/>
</dbReference>
<dbReference type="SUPFAM" id="SSF51011">
    <property type="entry name" value="Glycosyl hydrolase domain"/>
    <property type="match status" value="1"/>
</dbReference>
<feature type="signal peptide" evidence="2">
    <location>
        <begin position="1"/>
        <end status="unknown"/>
    </location>
</feature>
<feature type="chain" id="PRO_0000394611" description="Probable alpha-L-arabinofuranosidase C">
    <location>
        <begin status="unknown"/>
        <end position="505"/>
    </location>
</feature>
<feature type="glycosylation site" description="N-linked (GlcNAc...) asparagine" evidence="2">
    <location>
        <position position="81"/>
    </location>
</feature>
<feature type="glycosylation site" description="N-linked (GlcNAc...) asparagine" evidence="2">
    <location>
        <position position="152"/>
    </location>
</feature>
<feature type="glycosylation site" description="N-linked (GlcNAc...) asparagine" evidence="2">
    <location>
        <position position="269"/>
    </location>
</feature>
<feature type="glycosylation site" description="N-linked (GlcNAc...) asparagine" evidence="2">
    <location>
        <position position="438"/>
    </location>
</feature>
<reference key="1">
    <citation type="journal article" date="2008" name="PLoS Genet.">
        <title>Genomic islands in the pathogenic filamentous fungus Aspergillus fumigatus.</title>
        <authorList>
            <person name="Fedorova N.D."/>
            <person name="Khaldi N."/>
            <person name="Joardar V.S."/>
            <person name="Maiti R."/>
            <person name="Amedeo P."/>
            <person name="Anderson M.J."/>
            <person name="Crabtree J."/>
            <person name="Silva J.C."/>
            <person name="Badger J.H."/>
            <person name="Albarraq A."/>
            <person name="Angiuoli S."/>
            <person name="Bussey H."/>
            <person name="Bowyer P."/>
            <person name="Cotty P.J."/>
            <person name="Dyer P.S."/>
            <person name="Egan A."/>
            <person name="Galens K."/>
            <person name="Fraser-Liggett C.M."/>
            <person name="Haas B.J."/>
            <person name="Inman J.M."/>
            <person name="Kent R."/>
            <person name="Lemieux S."/>
            <person name="Malavazi I."/>
            <person name="Orvis J."/>
            <person name="Roemer T."/>
            <person name="Ronning C.M."/>
            <person name="Sundaram J.P."/>
            <person name="Sutton G."/>
            <person name="Turner G."/>
            <person name="Venter J.C."/>
            <person name="White O.R."/>
            <person name="Whitty B.R."/>
            <person name="Youngman P."/>
            <person name="Wolfe K.H."/>
            <person name="Goldman G.H."/>
            <person name="Wortman J.R."/>
            <person name="Jiang B."/>
            <person name="Denning D.W."/>
            <person name="Nierman W.C."/>
        </authorList>
    </citation>
    <scope>NUCLEOTIDE SEQUENCE [LARGE SCALE GENOMIC DNA]</scope>
    <source>
        <strain>CBS 144.89 / FGSC A1163 / CEA10</strain>
    </source>
</reference>
<evidence type="ECO:0000250" key="1"/>
<evidence type="ECO:0000255" key="2"/>
<evidence type="ECO:0000305" key="3"/>
<accession>B0XQB2</accession>
<gene>
    <name type="primary">abfC</name>
    <name type="ORF">AFUB_009340</name>
</gene>
<sequence>MTTFTKLSEQETPSISVHASRRISKINPNIYAGFTEHMGRCIYGGIYDPGNPLSDENGFRKDVLEALKELNIPVIRYPGGNFTATYHWIDGVGPKDQRPARPELAWLGTETNHFGTDEFMKWCELLGTEPYFCLNFGTGTLDEALAWVEYCNGTKDTYYANLRRKNGREEPYNIKYWALGNEVWGPWQVAQMTKEEYAHKAYQWAKALKLLDPSLKLILCGQDGTASWDYYTLKQCLLPAHSPLSTSTVPLIDMHSIHMYTCGSTHLPNVTAPLAAERAIEITSSLIDLAMIENGIPPDQPRPTICFDEWNVWDPLRAEGSKGAEESYTLSDALAVAIWLNVFVRKSKDVGMACIAQSVNVISPLMTTKDGIIKQTIWWPLYLFSKYMRGWTINAHVSCGAYEGETSPKWIRAVKDTPWLDVSATLGEDGYANVAVVNISDEKDMECKFEGATGDVTVFTVTGDSVSACNMKGKEEVGLTESTWDGKGAYKFPRHSLTLLRWKAE</sequence>
<comment type="function">
    <text evidence="1">Alpha-L-arabinofuranosidase involved in the degradation of arabinoxylan, a major component of plant hemicellulose. Acts only on small linear 1,5-alpha-linked L-arabinofuranosyl oligosaccharides (By similarity).</text>
</comment>
<comment type="catalytic activity">
    <reaction>
        <text>Hydrolysis of terminal non-reducing alpha-L-arabinofuranoside residues in alpha-L-arabinosides.</text>
        <dbReference type="EC" id="3.2.1.55"/>
    </reaction>
</comment>
<comment type="pathway">
    <text>Glycan metabolism; L-arabinan degradation.</text>
</comment>
<comment type="subcellular location">
    <subcellularLocation>
        <location evidence="1">Secreted</location>
    </subcellularLocation>
</comment>
<comment type="similarity">
    <text evidence="3">Belongs to the glycosyl hydrolase 51 family.</text>
</comment>
<comment type="sequence caution" evidence="3">
    <conflict type="erroneous gene model prediction">
        <sequence resource="EMBL-CDS" id="EDP56226"/>
    </conflict>
</comment>
<name>ABFC_ASPFC</name>
<organism>
    <name type="scientific">Aspergillus fumigatus (strain CBS 144.89 / FGSC A1163 / CEA10)</name>
    <name type="common">Neosartorya fumigata</name>
    <dbReference type="NCBI Taxonomy" id="451804"/>
    <lineage>
        <taxon>Eukaryota</taxon>
        <taxon>Fungi</taxon>
        <taxon>Dikarya</taxon>
        <taxon>Ascomycota</taxon>
        <taxon>Pezizomycotina</taxon>
        <taxon>Eurotiomycetes</taxon>
        <taxon>Eurotiomycetidae</taxon>
        <taxon>Eurotiales</taxon>
        <taxon>Aspergillaceae</taxon>
        <taxon>Aspergillus</taxon>
        <taxon>Aspergillus subgen. Fumigati</taxon>
    </lineage>
</organism>
<protein>
    <recommendedName>
        <fullName>Probable alpha-L-arabinofuranosidase C</fullName>
        <shortName>ABF C</shortName>
        <shortName>Arabinosidase C</shortName>
        <ecNumber>3.2.1.55</ecNumber>
    </recommendedName>
</protein>